<comment type="function">
    <text evidence="1">The glycine cleavage system catalyzes the degradation of glycine. The P protein binds the alpha-amino group of glycine through its pyridoxal phosphate cofactor; CO(2) is released and the remaining methylamine moiety is then transferred to the lipoamide cofactor of the H protein.</text>
</comment>
<comment type="catalytic activity">
    <reaction evidence="1">
        <text>N(6)-[(R)-lipoyl]-L-lysyl-[glycine-cleavage complex H protein] + glycine + H(+) = N(6)-[(R)-S(8)-aminomethyldihydrolipoyl]-L-lysyl-[glycine-cleavage complex H protein] + CO2</text>
        <dbReference type="Rhea" id="RHEA:24304"/>
        <dbReference type="Rhea" id="RHEA-COMP:10494"/>
        <dbReference type="Rhea" id="RHEA-COMP:10495"/>
        <dbReference type="ChEBI" id="CHEBI:15378"/>
        <dbReference type="ChEBI" id="CHEBI:16526"/>
        <dbReference type="ChEBI" id="CHEBI:57305"/>
        <dbReference type="ChEBI" id="CHEBI:83099"/>
        <dbReference type="ChEBI" id="CHEBI:83143"/>
        <dbReference type="EC" id="1.4.4.2"/>
    </reaction>
</comment>
<comment type="cofactor">
    <cofactor evidence="1">
        <name>pyridoxal 5'-phosphate</name>
        <dbReference type="ChEBI" id="CHEBI:597326"/>
    </cofactor>
</comment>
<comment type="subunit">
    <text evidence="1">The glycine cleavage system is composed of four proteins: P, T, L and H. In this organism, the P 'protein' is a heterodimer of two subunits.</text>
</comment>
<comment type="similarity">
    <text evidence="1">Belongs to the GcvP family. C-terminal subunit subfamily.</text>
</comment>
<keyword id="KW-0560">Oxidoreductase</keyword>
<keyword id="KW-0663">Pyridoxal phosphate</keyword>
<keyword id="KW-1185">Reference proteome</keyword>
<organism>
    <name type="scientific">Methylococcus capsulatus (strain ATCC 33009 / NCIMB 11132 / Bath)</name>
    <dbReference type="NCBI Taxonomy" id="243233"/>
    <lineage>
        <taxon>Bacteria</taxon>
        <taxon>Pseudomonadati</taxon>
        <taxon>Pseudomonadota</taxon>
        <taxon>Gammaproteobacteria</taxon>
        <taxon>Methylococcales</taxon>
        <taxon>Methylococcaceae</taxon>
        <taxon>Methylococcus</taxon>
    </lineage>
</organism>
<sequence length="488" mass="53309">MLIFDRSREGRACASLFPQTPADIRGLPGHLLRQTPPPLPEVTELDVVRHYTRLSQKNFSIDTHFYPLGSCTMKYNPKAANVLARQPGFAALHPLGTERFGQGTLSCLYELQEYLKTLTGMTAVSLSPAAGAQGEFCGVAMIRAYHDARNDHERNEILVPDAAHGTNPASAAMCGYQVREIPTNADGDVDLEALKQAVGPKTAGIMLTNPSTLGVFEHRIPEIAALVHEAGGLLYYDGANLNAILGKVRPGDMGFDVIHLNLHKTFSTPHGGGGPGAGPVGVNARLQPFLPLPMVARSGNGYRWLAESDRPQSIGRLSAFAGNVGVLLRAYVYIRLLGYPGLRRVAEYATLNANYLQKRLVEAGFDTAFPARRAAHEFILSVQRQKKEHHVTALDFAKRLLDYGFHAPTVYFPLLIPECLMIEPTETENKETLDAFVDAMAAILKEAAEEPERLGQAPHCTPVRRLDEARAARHPDLAWKPAAPVPPR</sequence>
<proteinExistence type="inferred from homology"/>
<accession>Q60BW5</accession>
<gene>
    <name evidence="1" type="primary">gcvPB</name>
    <name type="ordered locus">MCA0348</name>
</gene>
<reference key="1">
    <citation type="journal article" date="2004" name="PLoS Biol.">
        <title>Genomic insights into methanotrophy: the complete genome sequence of Methylococcus capsulatus (Bath).</title>
        <authorList>
            <person name="Ward N.L."/>
            <person name="Larsen O."/>
            <person name="Sakwa J."/>
            <person name="Bruseth L."/>
            <person name="Khouri H.M."/>
            <person name="Durkin A.S."/>
            <person name="Dimitrov G."/>
            <person name="Jiang L."/>
            <person name="Scanlan D."/>
            <person name="Kang K.H."/>
            <person name="Lewis M.R."/>
            <person name="Nelson K.E."/>
            <person name="Methe B.A."/>
            <person name="Wu M."/>
            <person name="Heidelberg J.F."/>
            <person name="Paulsen I.T."/>
            <person name="Fouts D.E."/>
            <person name="Ravel J."/>
            <person name="Tettelin H."/>
            <person name="Ren Q."/>
            <person name="Read T.D."/>
            <person name="DeBoy R.T."/>
            <person name="Seshadri R."/>
            <person name="Salzberg S.L."/>
            <person name="Jensen H.B."/>
            <person name="Birkeland N.K."/>
            <person name="Nelson W.C."/>
            <person name="Dodson R.J."/>
            <person name="Grindhaug S.H."/>
            <person name="Holt I.E."/>
            <person name="Eidhammer I."/>
            <person name="Jonasen I."/>
            <person name="Vanaken S."/>
            <person name="Utterback T.R."/>
            <person name="Feldblyum T.V."/>
            <person name="Fraser C.M."/>
            <person name="Lillehaug J.R."/>
            <person name="Eisen J.A."/>
        </authorList>
    </citation>
    <scope>NUCLEOTIDE SEQUENCE [LARGE SCALE GENOMIC DNA]</scope>
    <source>
        <strain>ATCC 33009 / NCIMB 11132 / Bath</strain>
    </source>
</reference>
<evidence type="ECO:0000255" key="1">
    <source>
        <dbReference type="HAMAP-Rule" id="MF_00713"/>
    </source>
</evidence>
<feature type="chain" id="PRO_1000045698" description="Probable glycine dehydrogenase (decarboxylating) subunit 2">
    <location>
        <begin position="1"/>
        <end position="488"/>
    </location>
</feature>
<feature type="modified residue" description="N6-(pyridoxal phosphate)lysine" evidence="1">
    <location>
        <position position="264"/>
    </location>
</feature>
<protein>
    <recommendedName>
        <fullName evidence="1">Probable glycine dehydrogenase (decarboxylating) subunit 2</fullName>
        <ecNumber evidence="1">1.4.4.2</ecNumber>
    </recommendedName>
    <alternativeName>
        <fullName evidence="1">Glycine cleavage system P-protein subunit 2</fullName>
    </alternativeName>
    <alternativeName>
        <fullName evidence="1">Glycine decarboxylase subunit 2</fullName>
    </alternativeName>
    <alternativeName>
        <fullName evidence="1">Glycine dehydrogenase (aminomethyl-transferring) subunit 2</fullName>
    </alternativeName>
</protein>
<name>GCSPB_METCA</name>
<dbReference type="EC" id="1.4.4.2" evidence="1"/>
<dbReference type="EMBL" id="AE017282">
    <property type="protein sequence ID" value="AAU90547.1"/>
    <property type="molecule type" value="Genomic_DNA"/>
</dbReference>
<dbReference type="RefSeq" id="WP_010959709.1">
    <property type="nucleotide sequence ID" value="NC_002977.6"/>
</dbReference>
<dbReference type="SMR" id="Q60BW5"/>
<dbReference type="STRING" id="243233.MCA0348"/>
<dbReference type="GeneID" id="88222689"/>
<dbReference type="KEGG" id="mca:MCA0348"/>
<dbReference type="eggNOG" id="COG1003">
    <property type="taxonomic scope" value="Bacteria"/>
</dbReference>
<dbReference type="HOGENOM" id="CLU_004620_5_0_6"/>
<dbReference type="Proteomes" id="UP000006821">
    <property type="component" value="Chromosome"/>
</dbReference>
<dbReference type="GO" id="GO:0005829">
    <property type="term" value="C:cytosol"/>
    <property type="evidence" value="ECO:0007669"/>
    <property type="project" value="TreeGrafter"/>
</dbReference>
<dbReference type="GO" id="GO:0005960">
    <property type="term" value="C:glycine cleavage complex"/>
    <property type="evidence" value="ECO:0007669"/>
    <property type="project" value="TreeGrafter"/>
</dbReference>
<dbReference type="GO" id="GO:0016594">
    <property type="term" value="F:glycine binding"/>
    <property type="evidence" value="ECO:0007669"/>
    <property type="project" value="TreeGrafter"/>
</dbReference>
<dbReference type="GO" id="GO:0004375">
    <property type="term" value="F:glycine dehydrogenase (decarboxylating) activity"/>
    <property type="evidence" value="ECO:0007669"/>
    <property type="project" value="UniProtKB-EC"/>
</dbReference>
<dbReference type="GO" id="GO:0030170">
    <property type="term" value="F:pyridoxal phosphate binding"/>
    <property type="evidence" value="ECO:0007669"/>
    <property type="project" value="TreeGrafter"/>
</dbReference>
<dbReference type="GO" id="GO:0019464">
    <property type="term" value="P:glycine decarboxylation via glycine cleavage system"/>
    <property type="evidence" value="ECO:0007669"/>
    <property type="project" value="UniProtKB-UniRule"/>
</dbReference>
<dbReference type="CDD" id="cd00613">
    <property type="entry name" value="GDC-P"/>
    <property type="match status" value="1"/>
</dbReference>
<dbReference type="FunFam" id="3.40.640.10:FF:000034">
    <property type="entry name" value="Probable glycine dehydrogenase (decarboxylating) subunit 2"/>
    <property type="match status" value="1"/>
</dbReference>
<dbReference type="FunFam" id="3.90.1150.10:FF:000014">
    <property type="entry name" value="Probable glycine dehydrogenase (decarboxylating) subunit 2"/>
    <property type="match status" value="1"/>
</dbReference>
<dbReference type="Gene3D" id="6.20.440.10">
    <property type="match status" value="1"/>
</dbReference>
<dbReference type="Gene3D" id="3.90.1150.10">
    <property type="entry name" value="Aspartate Aminotransferase, domain 1"/>
    <property type="match status" value="1"/>
</dbReference>
<dbReference type="Gene3D" id="3.40.640.10">
    <property type="entry name" value="Type I PLP-dependent aspartate aminotransferase-like (Major domain)"/>
    <property type="match status" value="1"/>
</dbReference>
<dbReference type="HAMAP" id="MF_00713">
    <property type="entry name" value="GcvPB"/>
    <property type="match status" value="1"/>
</dbReference>
<dbReference type="InterPro" id="IPR000192">
    <property type="entry name" value="Aminotrans_V_dom"/>
</dbReference>
<dbReference type="InterPro" id="IPR023012">
    <property type="entry name" value="GcvPB"/>
</dbReference>
<dbReference type="InterPro" id="IPR049316">
    <property type="entry name" value="GDC-P_C"/>
</dbReference>
<dbReference type="InterPro" id="IPR020581">
    <property type="entry name" value="GDC_P"/>
</dbReference>
<dbReference type="InterPro" id="IPR015424">
    <property type="entry name" value="PyrdxlP-dep_Trfase"/>
</dbReference>
<dbReference type="InterPro" id="IPR015421">
    <property type="entry name" value="PyrdxlP-dep_Trfase_major"/>
</dbReference>
<dbReference type="InterPro" id="IPR015422">
    <property type="entry name" value="PyrdxlP-dep_Trfase_small"/>
</dbReference>
<dbReference type="NCBIfam" id="NF003346">
    <property type="entry name" value="PRK04366.1"/>
    <property type="match status" value="1"/>
</dbReference>
<dbReference type="PANTHER" id="PTHR11773:SF1">
    <property type="entry name" value="GLYCINE DEHYDROGENASE (DECARBOXYLATING), MITOCHONDRIAL"/>
    <property type="match status" value="1"/>
</dbReference>
<dbReference type="PANTHER" id="PTHR11773">
    <property type="entry name" value="GLYCINE DEHYDROGENASE, DECARBOXYLATING"/>
    <property type="match status" value="1"/>
</dbReference>
<dbReference type="Pfam" id="PF00266">
    <property type="entry name" value="Aminotran_5"/>
    <property type="match status" value="1"/>
</dbReference>
<dbReference type="Pfam" id="PF21478">
    <property type="entry name" value="GcvP2_C"/>
    <property type="match status" value="1"/>
</dbReference>
<dbReference type="SUPFAM" id="SSF53383">
    <property type="entry name" value="PLP-dependent transferases"/>
    <property type="match status" value="1"/>
</dbReference>